<keyword id="KW-0067">ATP-binding</keyword>
<keyword id="KW-0963">Cytoplasm</keyword>
<keyword id="KW-0309">Germination</keyword>
<keyword id="KW-0418">Kinase</keyword>
<keyword id="KW-0547">Nucleotide-binding</keyword>
<keyword id="KW-0723">Serine/threonine-protein kinase</keyword>
<keyword id="KW-0346">Stress response</keyword>
<keyword id="KW-0808">Transferase</keyword>
<keyword id="KW-0843">Virulence</keyword>
<organism>
    <name type="scientific">Pyricularia oryzae</name>
    <name type="common">Rice blast fungus</name>
    <name type="synonym">Magnaporthe oryzae</name>
    <dbReference type="NCBI Taxonomy" id="318829"/>
    <lineage>
        <taxon>Eukaryota</taxon>
        <taxon>Fungi</taxon>
        <taxon>Dikarya</taxon>
        <taxon>Ascomycota</taxon>
        <taxon>Pezizomycotina</taxon>
        <taxon>Sordariomycetes</taxon>
        <taxon>Sordariomycetidae</taxon>
        <taxon>Magnaporthales</taxon>
        <taxon>Pyriculariaceae</taxon>
        <taxon>Pyricularia</taxon>
    </lineage>
</organism>
<feature type="chain" id="PRO_0000453108" description="Glycogen synthase kinase 1">
    <location>
        <begin position="1"/>
        <end position="394"/>
    </location>
</feature>
<feature type="domain" description="Protein kinase" evidence="1">
    <location>
        <begin position="35"/>
        <end position="318"/>
    </location>
</feature>
<feature type="binding site" evidence="1">
    <location>
        <begin position="41"/>
        <end position="49"/>
    </location>
    <ligand>
        <name>ATP</name>
        <dbReference type="ChEBI" id="CHEBI:30616"/>
    </ligand>
</feature>
<feature type="binding site" evidence="1">
    <location>
        <position position="64"/>
    </location>
    <ligand>
        <name>ATP</name>
        <dbReference type="ChEBI" id="CHEBI:30616"/>
    </ligand>
</feature>
<proteinExistence type="evidence at protein level"/>
<accession>Q3S406</accession>
<evidence type="ECO:0000255" key="1">
    <source>
        <dbReference type="PROSITE-ProRule" id="PRU00159"/>
    </source>
</evidence>
<evidence type="ECO:0000269" key="2">
    <source>
    </source>
</evidence>
<evidence type="ECO:0000269" key="3">
    <source>
    </source>
</evidence>
<evidence type="ECO:0000303" key="4">
    <source>
    </source>
</evidence>
<evidence type="ECO:0000305" key="5"/>
<dbReference type="EC" id="2.7.11.1" evidence="3"/>
<dbReference type="EMBL" id="DQ168585">
    <property type="protein sequence ID" value="ABA02071.1"/>
    <property type="molecule type" value="Genomic_DNA"/>
</dbReference>
<dbReference type="SMR" id="Q3S406"/>
<dbReference type="GO" id="GO:0005737">
    <property type="term" value="C:cytoplasm"/>
    <property type="evidence" value="ECO:0007669"/>
    <property type="project" value="UniProtKB-SubCell"/>
</dbReference>
<dbReference type="GO" id="GO:0005634">
    <property type="term" value="C:nucleus"/>
    <property type="evidence" value="ECO:0007669"/>
    <property type="project" value="TreeGrafter"/>
</dbReference>
<dbReference type="GO" id="GO:0005524">
    <property type="term" value="F:ATP binding"/>
    <property type="evidence" value="ECO:0007669"/>
    <property type="project" value="UniProtKB-KW"/>
</dbReference>
<dbReference type="GO" id="GO:0004674">
    <property type="term" value="F:protein serine/threonine kinase activity"/>
    <property type="evidence" value="ECO:0007669"/>
    <property type="project" value="UniProtKB-KW"/>
</dbReference>
<dbReference type="GO" id="GO:0004712">
    <property type="term" value="F:protein serine/threonine/tyrosine kinase activity"/>
    <property type="evidence" value="ECO:0007669"/>
    <property type="project" value="TreeGrafter"/>
</dbReference>
<dbReference type="GO" id="GO:0030154">
    <property type="term" value="P:cell differentiation"/>
    <property type="evidence" value="ECO:0007669"/>
    <property type="project" value="TreeGrafter"/>
</dbReference>
<dbReference type="GO" id="GO:0051094">
    <property type="term" value="P:positive regulation of developmental process"/>
    <property type="evidence" value="ECO:0007669"/>
    <property type="project" value="UniProtKB-ARBA"/>
</dbReference>
<dbReference type="GO" id="GO:0007165">
    <property type="term" value="P:signal transduction"/>
    <property type="evidence" value="ECO:0007669"/>
    <property type="project" value="TreeGrafter"/>
</dbReference>
<dbReference type="CDD" id="cd14137">
    <property type="entry name" value="STKc_GSK3"/>
    <property type="match status" value="1"/>
</dbReference>
<dbReference type="FunFam" id="3.30.200.20:FF:000009">
    <property type="entry name" value="Glycogen synthase kinase-3 beta"/>
    <property type="match status" value="1"/>
</dbReference>
<dbReference type="FunFam" id="1.10.510.10:FF:000082">
    <property type="entry name" value="Shaggy-related protein kinase kappa"/>
    <property type="match status" value="1"/>
</dbReference>
<dbReference type="Gene3D" id="3.30.200.20">
    <property type="entry name" value="Phosphorylase Kinase, domain 1"/>
    <property type="match status" value="1"/>
</dbReference>
<dbReference type="Gene3D" id="1.10.510.10">
    <property type="entry name" value="Transferase(Phosphotransferase) domain 1"/>
    <property type="match status" value="1"/>
</dbReference>
<dbReference type="InterPro" id="IPR050591">
    <property type="entry name" value="GSK-3"/>
</dbReference>
<dbReference type="InterPro" id="IPR011009">
    <property type="entry name" value="Kinase-like_dom_sf"/>
</dbReference>
<dbReference type="InterPro" id="IPR000719">
    <property type="entry name" value="Prot_kinase_dom"/>
</dbReference>
<dbReference type="InterPro" id="IPR017441">
    <property type="entry name" value="Protein_kinase_ATP_BS"/>
</dbReference>
<dbReference type="InterPro" id="IPR008271">
    <property type="entry name" value="Ser/Thr_kinase_AS"/>
</dbReference>
<dbReference type="InterPro" id="IPR039192">
    <property type="entry name" value="STKc_GSK3"/>
</dbReference>
<dbReference type="PANTHER" id="PTHR24057">
    <property type="entry name" value="GLYCOGEN SYNTHASE KINASE-3 ALPHA"/>
    <property type="match status" value="1"/>
</dbReference>
<dbReference type="PANTHER" id="PTHR24057:SF0">
    <property type="entry name" value="PROTEIN KINASE SHAGGY-RELATED"/>
    <property type="match status" value="1"/>
</dbReference>
<dbReference type="Pfam" id="PF00069">
    <property type="entry name" value="Pkinase"/>
    <property type="match status" value="1"/>
</dbReference>
<dbReference type="SMART" id="SM00220">
    <property type="entry name" value="S_TKc"/>
    <property type="match status" value="1"/>
</dbReference>
<dbReference type="SUPFAM" id="SSF56112">
    <property type="entry name" value="Protein kinase-like (PK-like)"/>
    <property type="match status" value="1"/>
</dbReference>
<dbReference type="PROSITE" id="PS00107">
    <property type="entry name" value="PROTEIN_KINASE_ATP"/>
    <property type="match status" value="1"/>
</dbReference>
<dbReference type="PROSITE" id="PS50011">
    <property type="entry name" value="PROTEIN_KINASE_DOM"/>
    <property type="match status" value="1"/>
</dbReference>
<dbReference type="PROSITE" id="PS00108">
    <property type="entry name" value="PROTEIN_KINASE_ST"/>
    <property type="match status" value="1"/>
</dbReference>
<reference key="1">
    <citation type="journal article" date="2017" name="Sci. Rep.">
        <title>The glycogen synthase kinase MoGsk1, regulated by Mps1 MAP kinase, is required for fungal development and pathogenicity in Magnaporthe oryzae.</title>
        <authorList>
            <person name="Zhou T."/>
            <person name="Dagdas Y.F."/>
            <person name="Zhu X."/>
            <person name="Zheng S."/>
            <person name="Chen L."/>
            <person name="Cartwright Z."/>
            <person name="Talbot N.J."/>
            <person name="Wang Z."/>
        </authorList>
    </citation>
    <scope>NUCLEOTIDE SEQUENCE [GENOMIC DNA]</scope>
    <scope>INDUCTION</scope>
    <scope>FUNCTION</scope>
    <scope>DISRUPTION PHENOTYPE</scope>
    <scope>SUBCELLULAR LOCATION</scope>
    <source>
        <strain>Guyane 11</strain>
    </source>
</reference>
<reference key="2">
    <citation type="journal article" date="2019" name="Autophagy">
        <title>Histone acetyltransferase MoHat1 acetylates autophagy-related proteins MoAtg3 and MoAtg9 to orchestrate functional appressorium formation and pathogenicity in Magnaporthe oryzae.</title>
        <authorList>
            <person name="Yin Z."/>
            <person name="Chen C."/>
            <person name="Yang J."/>
            <person name="Feng W."/>
            <person name="Liu X."/>
            <person name="Zuo R."/>
            <person name="Wang J."/>
            <person name="Yang L."/>
            <person name="Zhong K."/>
            <person name="Gao C."/>
            <person name="Zhang H."/>
            <person name="Zheng X."/>
            <person name="Wang P."/>
            <person name="Zhang Z."/>
        </authorList>
    </citation>
    <scope>FUNCTION</scope>
    <scope>CATALYTIC ACTIVITY</scope>
</reference>
<sequence>MSQNRPAAFNTLRMGEVIREKVQDGITGETRDLQYTQCKIVGNGSFGVVFQTKLSPSNEDAAIKRVLQDKRFKNRELQIMRIVRHPNIVQLKAFYYSNGERRDEVYLNLVQEFVPETVYRASRFFNKMKTTMPILEVKLYIYQLFRALAYIHSQGICHRDIKPQNLLLDPTTGILKLCDFGSAKILVENEPNVSYICSRYYRAPELIFGATNYTTKIDVWSTGCVMAELMLGQPLFPGESGIDQLVEIIKVLGTPTREQIRTMNPNYMEHKFPQIKPHPFNRVLRKADNNAIDLIARLLEYTPTERLGAIDAMVHPFFDDLRNPSTKLPDSRHQTGQVRDLPPLFDFNRHELSIAPQLNHQLVPPHVRPTLAAQGLDIDHFTPMRKEDMLARLD</sequence>
<comment type="function">
    <text evidence="2 3">Protein kinase that acts downstream of the MPS1 MAPK cascade as a highly conservative signal modulator that dictates growth, conidiation and pathogenicity (PubMed:28424497). Phosphorylates HAT1 at 'Ser-8' to block its translocation from the nucleus to the cytoplasm where HAT1 positively regulates appressorium development and pathogenicity (PubMed:30776962).</text>
</comment>
<comment type="catalytic activity">
    <reaction evidence="3">
        <text>L-seryl-[protein] + ATP = O-phospho-L-seryl-[protein] + ADP + H(+)</text>
        <dbReference type="Rhea" id="RHEA:17989"/>
        <dbReference type="Rhea" id="RHEA-COMP:9863"/>
        <dbReference type="Rhea" id="RHEA-COMP:11604"/>
        <dbReference type="ChEBI" id="CHEBI:15378"/>
        <dbReference type="ChEBI" id="CHEBI:29999"/>
        <dbReference type="ChEBI" id="CHEBI:30616"/>
        <dbReference type="ChEBI" id="CHEBI:83421"/>
        <dbReference type="ChEBI" id="CHEBI:456216"/>
        <dbReference type="EC" id="2.7.11.1"/>
    </reaction>
</comment>
<comment type="subcellular location">
    <subcellularLocation>
        <location evidence="2">Cytoplasm</location>
    </subcellularLocation>
    <text evidence="2">Mainly localizes to the cytoplasm at the conidial stage.</text>
</comment>
<comment type="induction">
    <text evidence="2">Expression is regulated by MPS1 MAP kinase, particularly under stress conditions.</text>
</comment>
<comment type="disruption phenotype">
    <text evidence="2">Leads to significant delay in mycelial growth, complete loss of conidiation and inability to penetrate the host surface by mycelia-formed appressorium-like structures, consequently resulting in loss of pathogenicity.</text>
</comment>
<comment type="similarity">
    <text evidence="5">Belongs to the protein kinase superfamily. CMGC Ser/Thr protein kinase family. GSK-3 subfamily.</text>
</comment>
<protein>
    <recommendedName>
        <fullName evidence="4">Glycogen synthase kinase 1</fullName>
        <ecNumber evidence="3">2.7.11.1</ecNumber>
    </recommendedName>
</protein>
<name>GSK1_PYROR</name>
<gene>
    <name evidence="4" type="primary">GSK1</name>
</gene>